<name>FADA4_MYCLE</name>
<reference key="1">
    <citation type="submission" date="1994-03" db="EMBL/GenBank/DDBJ databases">
        <authorList>
            <person name="Smith D.R."/>
            <person name="Robison K."/>
        </authorList>
    </citation>
    <scope>NUCLEOTIDE SEQUENCE [GENOMIC DNA]</scope>
</reference>
<reference key="2">
    <citation type="journal article" date="2001" name="Nature">
        <title>Massive gene decay in the leprosy bacillus.</title>
        <authorList>
            <person name="Cole S.T."/>
            <person name="Eiglmeier K."/>
            <person name="Parkhill J."/>
            <person name="James K.D."/>
            <person name="Thomson N.R."/>
            <person name="Wheeler P.R."/>
            <person name="Honore N."/>
            <person name="Garnier T."/>
            <person name="Churcher C.M."/>
            <person name="Harris D.E."/>
            <person name="Mungall K.L."/>
            <person name="Basham D."/>
            <person name="Brown D."/>
            <person name="Chillingworth T."/>
            <person name="Connor R."/>
            <person name="Davies R.M."/>
            <person name="Devlin K."/>
            <person name="Duthoy S."/>
            <person name="Feltwell T."/>
            <person name="Fraser A."/>
            <person name="Hamlin N."/>
            <person name="Holroyd S."/>
            <person name="Hornsby T."/>
            <person name="Jagels K."/>
            <person name="Lacroix C."/>
            <person name="Maclean J."/>
            <person name="Moule S."/>
            <person name="Murphy L.D."/>
            <person name="Oliver K."/>
            <person name="Quail M.A."/>
            <person name="Rajandream M.A."/>
            <person name="Rutherford K.M."/>
            <person name="Rutter S."/>
            <person name="Seeger K."/>
            <person name="Simon S."/>
            <person name="Simmonds M."/>
            <person name="Skelton J."/>
            <person name="Squares R."/>
            <person name="Squares S."/>
            <person name="Stevens K."/>
            <person name="Taylor K."/>
            <person name="Whitehead S."/>
            <person name="Woodward J.R."/>
            <person name="Barrell B.G."/>
        </authorList>
    </citation>
    <scope>NUCLEOTIDE SEQUENCE [LARGE SCALE GENOMIC DNA]</scope>
    <source>
        <strain>TN</strain>
    </source>
</reference>
<proteinExistence type="inferred from homology"/>
<comment type="catalytic activity">
    <reaction evidence="2">
        <text>2 acetyl-CoA = acetoacetyl-CoA + CoA</text>
        <dbReference type="Rhea" id="RHEA:21036"/>
        <dbReference type="ChEBI" id="CHEBI:57286"/>
        <dbReference type="ChEBI" id="CHEBI:57287"/>
        <dbReference type="ChEBI" id="CHEBI:57288"/>
        <dbReference type="EC" id="2.3.1.9"/>
    </reaction>
</comment>
<comment type="similarity">
    <text evidence="3">Belongs to the thiolase-like superfamily. Thiolase family.</text>
</comment>
<feature type="chain" id="PRO_0000206457" description="Probable acetyl-CoA acetyltransferase">
    <location>
        <begin position="1"/>
        <end position="393"/>
    </location>
</feature>
<feature type="active site" description="Acyl-thioester intermediate" evidence="1">
    <location>
        <position position="88"/>
    </location>
</feature>
<feature type="active site" description="Proton acceptor" evidence="2">
    <location>
        <position position="349"/>
    </location>
</feature>
<feature type="active site" description="Proton acceptor" evidence="2">
    <location>
        <position position="379"/>
    </location>
</feature>
<dbReference type="EC" id="2.3.1.9"/>
<dbReference type="EMBL" id="U00014">
    <property type="protein sequence ID" value="AAA50881.1"/>
    <property type="molecule type" value="Genomic_DNA"/>
</dbReference>
<dbReference type="EMBL" id="AL583921">
    <property type="protein sequence ID" value="CAC31539.1"/>
    <property type="molecule type" value="Genomic_DNA"/>
</dbReference>
<dbReference type="PIR" id="S72804">
    <property type="entry name" value="S72804"/>
</dbReference>
<dbReference type="RefSeq" id="NP_301848.1">
    <property type="nucleotide sequence ID" value="NC_002677.1"/>
</dbReference>
<dbReference type="RefSeq" id="WP_010908172.1">
    <property type="nucleotide sequence ID" value="NC_002677.1"/>
</dbReference>
<dbReference type="SMR" id="P46707"/>
<dbReference type="STRING" id="272631.gene:17574988"/>
<dbReference type="KEGG" id="mle:ML1158"/>
<dbReference type="PATRIC" id="fig|272631.5.peg.2090"/>
<dbReference type="Leproma" id="ML1158"/>
<dbReference type="eggNOG" id="COG0183">
    <property type="taxonomic scope" value="Bacteria"/>
</dbReference>
<dbReference type="HOGENOM" id="CLU_031026_0_0_11"/>
<dbReference type="OrthoDB" id="9764638at2"/>
<dbReference type="Proteomes" id="UP000000806">
    <property type="component" value="Chromosome"/>
</dbReference>
<dbReference type="GO" id="GO:0003985">
    <property type="term" value="F:acetyl-CoA C-acetyltransferase activity"/>
    <property type="evidence" value="ECO:0007669"/>
    <property type="project" value="UniProtKB-EC"/>
</dbReference>
<dbReference type="CDD" id="cd00751">
    <property type="entry name" value="thiolase"/>
    <property type="match status" value="1"/>
</dbReference>
<dbReference type="Gene3D" id="3.40.47.10">
    <property type="match status" value="2"/>
</dbReference>
<dbReference type="InterPro" id="IPR002155">
    <property type="entry name" value="Thiolase"/>
</dbReference>
<dbReference type="InterPro" id="IPR016039">
    <property type="entry name" value="Thiolase-like"/>
</dbReference>
<dbReference type="InterPro" id="IPR020615">
    <property type="entry name" value="Thiolase_acyl_enz_int_AS"/>
</dbReference>
<dbReference type="InterPro" id="IPR020610">
    <property type="entry name" value="Thiolase_AS"/>
</dbReference>
<dbReference type="InterPro" id="IPR020617">
    <property type="entry name" value="Thiolase_C"/>
</dbReference>
<dbReference type="InterPro" id="IPR020613">
    <property type="entry name" value="Thiolase_CS"/>
</dbReference>
<dbReference type="InterPro" id="IPR020616">
    <property type="entry name" value="Thiolase_N"/>
</dbReference>
<dbReference type="NCBIfam" id="TIGR01930">
    <property type="entry name" value="AcCoA-C-Actrans"/>
    <property type="match status" value="1"/>
</dbReference>
<dbReference type="PANTHER" id="PTHR18919:SF107">
    <property type="entry name" value="ACETYL-COA ACETYLTRANSFERASE, CYTOSOLIC"/>
    <property type="match status" value="1"/>
</dbReference>
<dbReference type="PANTHER" id="PTHR18919">
    <property type="entry name" value="ACETYL-COA C-ACYLTRANSFERASE"/>
    <property type="match status" value="1"/>
</dbReference>
<dbReference type="Pfam" id="PF02803">
    <property type="entry name" value="Thiolase_C"/>
    <property type="match status" value="1"/>
</dbReference>
<dbReference type="Pfam" id="PF00108">
    <property type="entry name" value="Thiolase_N"/>
    <property type="match status" value="1"/>
</dbReference>
<dbReference type="PIRSF" id="PIRSF000429">
    <property type="entry name" value="Ac-CoA_Ac_transf"/>
    <property type="match status" value="1"/>
</dbReference>
<dbReference type="SUPFAM" id="SSF53901">
    <property type="entry name" value="Thiolase-like"/>
    <property type="match status" value="2"/>
</dbReference>
<dbReference type="PROSITE" id="PS00098">
    <property type="entry name" value="THIOLASE_1"/>
    <property type="match status" value="1"/>
</dbReference>
<dbReference type="PROSITE" id="PS00737">
    <property type="entry name" value="THIOLASE_2"/>
    <property type="match status" value="1"/>
</dbReference>
<dbReference type="PROSITE" id="PS00099">
    <property type="entry name" value="THIOLASE_3"/>
    <property type="match status" value="1"/>
</dbReference>
<sequence length="393" mass="40529">MTTSVIVTGARTPIGKLMGSLKDFSASDLGAITIAAALKKANVAPSIVQYVIIGQVLTAGAGQMPARQAAVAAGIGWDVPALTINKMCLSGLDAIALADQLIRAGEFDVVVAGGQESMTKAPHLLMDSRSGYKYGDVTIVDHLAYDGLHDVFTNQPMGALTEQRNDVEKFTRQEQDEFAARSHQKAAAAWKDGVFADEVVPVSIPQSKGDSLQFTEDEGIRANTSAESLAGLKPAFRCGGTITPGSASQISDGAATVVVMNKEKAQQLGLTWLVEIGAHGVVAGPDSTLQSQPANAIKKAVDREGISVEQLDVVEINEAFAAVALASARELGIAPELVNVNGGAIAVGHPLGMSGARITLHVALELARRGSGYGVAALCGAGGQGDALILRAV</sequence>
<evidence type="ECO:0000250" key="1"/>
<evidence type="ECO:0000255" key="2">
    <source>
        <dbReference type="PROSITE-ProRule" id="PRU10020"/>
    </source>
</evidence>
<evidence type="ECO:0000305" key="3"/>
<organism>
    <name type="scientific">Mycobacterium leprae (strain TN)</name>
    <dbReference type="NCBI Taxonomy" id="272631"/>
    <lineage>
        <taxon>Bacteria</taxon>
        <taxon>Bacillati</taxon>
        <taxon>Actinomycetota</taxon>
        <taxon>Actinomycetes</taxon>
        <taxon>Mycobacteriales</taxon>
        <taxon>Mycobacteriaceae</taxon>
        <taxon>Mycobacterium</taxon>
    </lineage>
</organism>
<keyword id="KW-0012">Acyltransferase</keyword>
<keyword id="KW-1185">Reference proteome</keyword>
<keyword id="KW-0808">Transferase</keyword>
<gene>
    <name type="primary">fadA4</name>
    <name type="ordered locus">ML1158</name>
    <name type="ORF">B1549_C1_166</name>
</gene>
<accession>P46707</accession>
<protein>
    <recommendedName>
        <fullName>Probable acetyl-CoA acetyltransferase</fullName>
        <ecNumber>2.3.1.9</ecNumber>
    </recommendedName>
    <alternativeName>
        <fullName>Acetoacetyl-CoA thiolase</fullName>
    </alternativeName>
</protein>